<keyword id="KW-0945">Host-virus interaction</keyword>
<keyword id="KW-1185">Reference proteome</keyword>
<keyword id="KW-0694">RNA-binding</keyword>
<keyword id="KW-0813">Transport</keyword>
<keyword id="KW-0916">Viral movement protein</keyword>
<organismHost>
    <name type="scientific">Colocasia esculenta</name>
    <name type="common">Wild taro</name>
    <name type="synonym">Arum esculentum</name>
    <dbReference type="NCBI Taxonomy" id="4460"/>
</organismHost>
<comment type="function">
    <text evidence="1">Transports viral genome to neighboring plant cells directly through plasmosdesmata, without any budding. The movement protein allows efficient cell to cell propagation, by bypassing the host cell wall barrier (By similarity).</text>
</comment>
<comment type="similarity">
    <text evidence="2">Belongs to the nucleorhabdovirus type-1 movement protein family.</text>
</comment>
<accession>Q5GA88</accession>
<name>MVP_TAVCV</name>
<evidence type="ECO:0000250" key="1"/>
<evidence type="ECO:0000305" key="2"/>
<sequence>MDPHTEFFLGKDRENASSPLIAPSRKIGLISAKVKTNETYSLFGKKKNQTAGTHLQFTSLTIKWTPLCPVTAGGQLNLVIHHNSSTVPILNIWSPTSTKWQQEVHGNLGFLTVNNCPYLVEGRLVGFSGTEAGIISITLHMDFKLRTQDLSPCKLIPSLIDNLHGPSFLYTSYTEDSVPDTNIHHLKHCIEDLQASVHALCGGRVHITESQALSLIATFRVRIVELLEHQEGTAFLNYNLATIKNMLTVATTSVVSKSYRTCLSNILDKMVVYDEAYWKKVLASPEK</sequence>
<dbReference type="EMBL" id="AY674964">
    <property type="protein sequence ID" value="AAV92084.1"/>
    <property type="molecule type" value="Genomic_RNA"/>
</dbReference>
<dbReference type="KEGG" id="vg:5076494"/>
<dbReference type="OrthoDB" id="15414at10239"/>
<dbReference type="Proteomes" id="UP000007540">
    <property type="component" value="Segment"/>
</dbReference>
<dbReference type="GO" id="GO:0003723">
    <property type="term" value="F:RNA binding"/>
    <property type="evidence" value="ECO:0007669"/>
    <property type="project" value="UniProtKB-KW"/>
</dbReference>
<dbReference type="GO" id="GO:0046740">
    <property type="term" value="P:transport of virus in host, cell to cell"/>
    <property type="evidence" value="ECO:0007669"/>
    <property type="project" value="UniProtKB-KW"/>
</dbReference>
<gene>
    <name type="primary">3</name>
</gene>
<organism>
    <name type="scientific">Taro vein chlorosis virus</name>
    <name type="common">TAVCV</name>
    <dbReference type="NCBI Taxonomy" id="2749935"/>
    <lineage>
        <taxon>Viruses</taxon>
        <taxon>Riboviria</taxon>
        <taxon>Orthornavirae</taxon>
        <taxon>Negarnaviricota</taxon>
        <taxon>Haploviricotina</taxon>
        <taxon>Monjiviricetes</taxon>
        <taxon>Mononegavirales</taxon>
        <taxon>Rhabdoviridae</taxon>
        <taxon>Betarhabdovirinae</taxon>
        <taxon>Alphanucleorhabdovirus</taxon>
    </lineage>
</organism>
<reference key="1">
    <citation type="journal article" date="2005" name="J. Gen. Virol.">
        <title>Taro vein chlorosis virus: characterization and variability of a new nucleorhabdovirus.</title>
        <authorList>
            <person name="Revill P."/>
            <person name="Trinh X."/>
            <person name="Dale J."/>
            <person name="Harding R."/>
        </authorList>
    </citation>
    <scope>NUCLEOTIDE SEQUENCE [GENOMIC RNA]</scope>
</reference>
<proteinExistence type="inferred from homology"/>
<feature type="chain" id="PRO_0000299230" description="Movement protein">
    <location>
        <begin position="1"/>
        <end position="287"/>
    </location>
</feature>
<protein>
    <recommendedName>
        <fullName>Movement protein</fullName>
        <shortName>MP</shortName>
    </recommendedName>
    <alternativeName>
        <fullName>Cell-to-cell transport protein</fullName>
    </alternativeName>
    <alternativeName>
        <fullName>Protein 3</fullName>
    </alternativeName>
</protein>